<name>PRDX3_HUMAN</name>
<dbReference type="EC" id="1.11.1.24" evidence="7 8"/>
<dbReference type="EMBL" id="D49396">
    <property type="protein sequence ID" value="BAA08389.1"/>
    <property type="molecule type" value="mRNA"/>
</dbReference>
<dbReference type="EMBL" id="AK313169">
    <property type="protein sequence ID" value="BAG35987.1"/>
    <property type="molecule type" value="mRNA"/>
</dbReference>
<dbReference type="EMBL" id="CR450344">
    <property type="protein sequence ID" value="CAG29340.1"/>
    <property type="molecule type" value="mRNA"/>
</dbReference>
<dbReference type="EMBL" id="BT020007">
    <property type="protein sequence ID" value="AAV38810.1"/>
    <property type="molecule type" value="mRNA"/>
</dbReference>
<dbReference type="EMBL" id="DQ298752">
    <property type="protein sequence ID" value="ABB84468.1"/>
    <property type="molecule type" value="Genomic_DNA"/>
</dbReference>
<dbReference type="EMBL" id="AL355861">
    <property type="status" value="NOT_ANNOTATED_CDS"/>
    <property type="molecule type" value="Genomic_DNA"/>
</dbReference>
<dbReference type="EMBL" id="CH471066">
    <property type="protein sequence ID" value="EAW49399.1"/>
    <property type="molecule type" value="Genomic_DNA"/>
</dbReference>
<dbReference type="EMBL" id="BC002685">
    <property type="protein sequence ID" value="AAH02685.1"/>
    <property type="molecule type" value="mRNA"/>
</dbReference>
<dbReference type="EMBL" id="BC007062">
    <property type="protein sequence ID" value="AAH07062.1"/>
    <property type="molecule type" value="mRNA"/>
</dbReference>
<dbReference type="EMBL" id="BC008435">
    <property type="protein sequence ID" value="AAH08435.1"/>
    <property type="molecule type" value="mRNA"/>
</dbReference>
<dbReference type="EMBL" id="BC009601">
    <property type="protein sequence ID" value="AAH09601.1"/>
    <property type="molecule type" value="mRNA"/>
</dbReference>
<dbReference type="EMBL" id="BC021691">
    <property type="protein sequence ID" value="AAH21691.1"/>
    <property type="molecule type" value="mRNA"/>
</dbReference>
<dbReference type="EMBL" id="BC022373">
    <property type="protein sequence ID" value="AAH22373.1"/>
    <property type="molecule type" value="mRNA"/>
</dbReference>
<dbReference type="EMBL" id="BC059169">
    <property type="protein sequence ID" value="AAH59169.1"/>
    <property type="molecule type" value="mRNA"/>
</dbReference>
<dbReference type="EMBL" id="BC111397">
    <property type="protein sequence ID" value="AAI11398.1"/>
    <property type="molecule type" value="mRNA"/>
</dbReference>
<dbReference type="CCDS" id="CCDS7611.1">
    <molecule id="P30048-1"/>
</dbReference>
<dbReference type="RefSeq" id="NP_001289201.1">
    <property type="nucleotide sequence ID" value="NM_001302272.1"/>
</dbReference>
<dbReference type="RefSeq" id="NP_006784.1">
    <molecule id="P30048-1"/>
    <property type="nucleotide sequence ID" value="NM_006793.5"/>
</dbReference>
<dbReference type="PDB" id="5JCG">
    <property type="method" value="X-ray"/>
    <property type="resolution" value="2.80 A"/>
    <property type="chains" value="A/B/C/D/E/F/G/H/I=62-256"/>
</dbReference>
<dbReference type="PDB" id="5UCX">
    <property type="method" value="X-ray"/>
    <property type="resolution" value="2.40 A"/>
    <property type="chains" value="A/B/C/D/E/F/G/H/I=62-256"/>
</dbReference>
<dbReference type="PDBsum" id="5JCG"/>
<dbReference type="PDBsum" id="5UCX"/>
<dbReference type="EMDB" id="EMD-6309"/>
<dbReference type="SMR" id="P30048"/>
<dbReference type="BioGRID" id="116136">
    <property type="interactions" value="316"/>
</dbReference>
<dbReference type="DIP" id="DIP-33600N"/>
<dbReference type="FunCoup" id="P30048">
    <property type="interactions" value="1159"/>
</dbReference>
<dbReference type="IntAct" id="P30048">
    <property type="interactions" value="120"/>
</dbReference>
<dbReference type="MINT" id="P30048"/>
<dbReference type="STRING" id="9606.ENSP00000298510"/>
<dbReference type="ChEMBL" id="CHEMBL4295742"/>
<dbReference type="PeroxiBase" id="4492">
    <property type="entry name" value="Hs2CysPrx03"/>
</dbReference>
<dbReference type="GlyGen" id="P30048">
    <property type="glycosylation" value="1 site, 1 O-linked glycan (1 site)"/>
</dbReference>
<dbReference type="iPTMnet" id="P30048"/>
<dbReference type="PhosphoSitePlus" id="P30048"/>
<dbReference type="SwissPalm" id="P30048"/>
<dbReference type="BioMuta" id="PRDX3"/>
<dbReference type="DMDM" id="2507171"/>
<dbReference type="OGP" id="P30048"/>
<dbReference type="CPTAC" id="CPTAC-115"/>
<dbReference type="CPTAC" id="CPTAC-116"/>
<dbReference type="jPOST" id="P30048"/>
<dbReference type="MassIVE" id="P30048"/>
<dbReference type="PaxDb" id="9606-ENSP00000298510"/>
<dbReference type="PeptideAtlas" id="P30048"/>
<dbReference type="ProteomicsDB" id="20445"/>
<dbReference type="ProteomicsDB" id="54628">
    <molecule id="P30048-1"/>
</dbReference>
<dbReference type="Pumba" id="P30048"/>
<dbReference type="TopDownProteomics" id="P30048-1">
    <molecule id="P30048-1"/>
</dbReference>
<dbReference type="Antibodypedia" id="3274">
    <property type="antibodies" value="559 antibodies from 41 providers"/>
</dbReference>
<dbReference type="DNASU" id="10935"/>
<dbReference type="Ensembl" id="ENST00000298510.4">
    <molecule id="P30048-1"/>
    <property type="protein sequence ID" value="ENSP00000298510.2"/>
    <property type="gene ID" value="ENSG00000165672.7"/>
</dbReference>
<dbReference type="GeneID" id="10935"/>
<dbReference type="KEGG" id="hsa:10935"/>
<dbReference type="MANE-Select" id="ENST00000298510.4">
    <property type="protein sequence ID" value="ENSP00000298510.2"/>
    <property type="RefSeq nucleotide sequence ID" value="NM_006793.5"/>
    <property type="RefSeq protein sequence ID" value="NP_006784.1"/>
</dbReference>
<dbReference type="UCSC" id="uc001lec.5">
    <molecule id="P30048-1"/>
    <property type="organism name" value="human"/>
</dbReference>
<dbReference type="AGR" id="HGNC:9354"/>
<dbReference type="CTD" id="10935"/>
<dbReference type="DisGeNET" id="10935"/>
<dbReference type="GeneCards" id="PRDX3"/>
<dbReference type="HGNC" id="HGNC:9354">
    <property type="gene designation" value="PRDX3"/>
</dbReference>
<dbReference type="HPA" id="ENSG00000165672">
    <property type="expression patterns" value="Low tissue specificity"/>
</dbReference>
<dbReference type="MalaCards" id="PRDX3"/>
<dbReference type="MIM" id="604769">
    <property type="type" value="gene"/>
</dbReference>
<dbReference type="MIM" id="619862">
    <property type="type" value="phenotype"/>
</dbReference>
<dbReference type="MIM" id="619871">
    <property type="type" value="phenotype"/>
</dbReference>
<dbReference type="neXtProt" id="NX_P30048"/>
<dbReference type="OpenTargets" id="ENSG00000165672"/>
<dbReference type="PharmGKB" id="PA33724"/>
<dbReference type="VEuPathDB" id="HostDB:ENSG00000165672"/>
<dbReference type="eggNOG" id="KOG0852">
    <property type="taxonomic scope" value="Eukaryota"/>
</dbReference>
<dbReference type="GeneTree" id="ENSGT00940000153430"/>
<dbReference type="HOGENOM" id="CLU_042529_21_0_1"/>
<dbReference type="InParanoid" id="P30048"/>
<dbReference type="OMA" id="KDSKQYF"/>
<dbReference type="OrthoDB" id="185659at2759"/>
<dbReference type="PAN-GO" id="P30048">
    <property type="GO annotations" value="5 GO annotations based on evolutionary models"/>
</dbReference>
<dbReference type="PhylomeDB" id="P30048"/>
<dbReference type="TreeFam" id="TF105181"/>
<dbReference type="PathwayCommons" id="P30048"/>
<dbReference type="Reactome" id="R-HSA-3299685">
    <property type="pathway name" value="Detoxification of Reactive Oxygen Species"/>
</dbReference>
<dbReference type="SignaLink" id="P30048"/>
<dbReference type="SIGNOR" id="P30048"/>
<dbReference type="BioGRID-ORCS" id="10935">
    <property type="hits" value="88 hits in 1155 CRISPR screens"/>
</dbReference>
<dbReference type="ChiTaRS" id="PRDX3">
    <property type="organism name" value="human"/>
</dbReference>
<dbReference type="GeneWiki" id="PRDX3"/>
<dbReference type="GenomeRNAi" id="10935"/>
<dbReference type="Pharos" id="P30048">
    <property type="development level" value="Tbio"/>
</dbReference>
<dbReference type="PRO" id="PR:P30048"/>
<dbReference type="Proteomes" id="UP000005640">
    <property type="component" value="Chromosome 10"/>
</dbReference>
<dbReference type="RNAct" id="P30048">
    <property type="molecule type" value="protein"/>
</dbReference>
<dbReference type="Bgee" id="ENSG00000165672">
    <property type="expression patterns" value="Expressed in adrenal tissue and 212 other cell types or tissues"/>
</dbReference>
<dbReference type="ExpressionAtlas" id="P30048">
    <property type="expression patterns" value="baseline and differential"/>
</dbReference>
<dbReference type="GO" id="GO:0005737">
    <property type="term" value="C:cytoplasm"/>
    <property type="evidence" value="ECO:0000314"/>
    <property type="project" value="UniProtKB"/>
</dbReference>
<dbReference type="GO" id="GO:0005829">
    <property type="term" value="C:cytosol"/>
    <property type="evidence" value="ECO:0000314"/>
    <property type="project" value="ParkinsonsUK-UCL"/>
</dbReference>
<dbReference type="GO" id="GO:0005769">
    <property type="term" value="C:early endosome"/>
    <property type="evidence" value="ECO:0000314"/>
    <property type="project" value="UniProtKB"/>
</dbReference>
<dbReference type="GO" id="GO:0043231">
    <property type="term" value="C:intracellular membrane-bounded organelle"/>
    <property type="evidence" value="ECO:0000314"/>
    <property type="project" value="HPA"/>
</dbReference>
<dbReference type="GO" id="GO:0005759">
    <property type="term" value="C:mitochondrial matrix"/>
    <property type="evidence" value="ECO:0000304"/>
    <property type="project" value="Reactome"/>
</dbReference>
<dbReference type="GO" id="GO:0005739">
    <property type="term" value="C:mitochondrion"/>
    <property type="evidence" value="ECO:0000314"/>
    <property type="project" value="UniProtKB"/>
</dbReference>
<dbReference type="GO" id="GO:0005654">
    <property type="term" value="C:nucleoplasm"/>
    <property type="evidence" value="ECO:0000314"/>
    <property type="project" value="HPA"/>
</dbReference>
<dbReference type="GO" id="GO:0005886">
    <property type="term" value="C:plasma membrane"/>
    <property type="evidence" value="ECO:0000314"/>
    <property type="project" value="HPA"/>
</dbReference>
<dbReference type="GO" id="GO:0032991">
    <property type="term" value="C:protein-containing complex"/>
    <property type="evidence" value="ECO:0000314"/>
    <property type="project" value="UniProtKB"/>
</dbReference>
<dbReference type="GO" id="GO:0043027">
    <property type="term" value="F:cysteine-type endopeptidase inhibitor activity involved in apoptotic process"/>
    <property type="evidence" value="ECO:0000315"/>
    <property type="project" value="UniProtKB"/>
</dbReference>
<dbReference type="GO" id="GO:0042802">
    <property type="term" value="F:identical protein binding"/>
    <property type="evidence" value="ECO:0000353"/>
    <property type="project" value="IntAct"/>
</dbReference>
<dbReference type="GO" id="GO:0102039">
    <property type="term" value="F:NADH-dependent peroxiredoxin activity"/>
    <property type="evidence" value="ECO:0000303"/>
    <property type="project" value="UniProtKB"/>
</dbReference>
<dbReference type="GO" id="GO:0019901">
    <property type="term" value="F:protein kinase binding"/>
    <property type="evidence" value="ECO:0000353"/>
    <property type="project" value="ParkinsonsUK-UCL"/>
</dbReference>
<dbReference type="GO" id="GO:0008379">
    <property type="term" value="F:thioredoxin peroxidase activity"/>
    <property type="evidence" value="ECO:0000314"/>
    <property type="project" value="ParkinsonsUK-UCL"/>
</dbReference>
<dbReference type="GO" id="GO:0045454">
    <property type="term" value="P:cell redox homeostasis"/>
    <property type="evidence" value="ECO:0000318"/>
    <property type="project" value="GO_Central"/>
</dbReference>
<dbReference type="GO" id="GO:0034599">
    <property type="term" value="P:cellular response to oxidative stress"/>
    <property type="evidence" value="ECO:0000314"/>
    <property type="project" value="ParkinsonsUK-UCL"/>
</dbReference>
<dbReference type="GO" id="GO:0034614">
    <property type="term" value="P:cellular response to reactive oxygen species"/>
    <property type="evidence" value="ECO:0000315"/>
    <property type="project" value="UniProtKB"/>
</dbReference>
<dbReference type="GO" id="GO:0042744">
    <property type="term" value="P:hydrogen peroxide catabolic process"/>
    <property type="evidence" value="ECO:0000314"/>
    <property type="project" value="MGI"/>
</dbReference>
<dbReference type="GO" id="GO:0001893">
    <property type="term" value="P:maternal placenta development"/>
    <property type="evidence" value="ECO:0007669"/>
    <property type="project" value="Ensembl"/>
</dbReference>
<dbReference type="GO" id="GO:0007005">
    <property type="term" value="P:mitochondrion organization"/>
    <property type="evidence" value="ECO:0000315"/>
    <property type="project" value="UniProtKB"/>
</dbReference>
<dbReference type="GO" id="GO:0030099">
    <property type="term" value="P:myeloid cell differentiation"/>
    <property type="evidence" value="ECO:0000250"/>
    <property type="project" value="UniProtKB"/>
</dbReference>
<dbReference type="GO" id="GO:0043066">
    <property type="term" value="P:negative regulation of apoptotic process"/>
    <property type="evidence" value="ECO:0000314"/>
    <property type="project" value="ParkinsonsUK-UCL"/>
</dbReference>
<dbReference type="GO" id="GO:0033673">
    <property type="term" value="P:negative regulation of kinase activity"/>
    <property type="evidence" value="ECO:0000314"/>
    <property type="project" value="UniProtKB"/>
</dbReference>
<dbReference type="GO" id="GO:0008284">
    <property type="term" value="P:positive regulation of cell population proliferation"/>
    <property type="evidence" value="ECO:0000314"/>
    <property type="project" value="UniProtKB"/>
</dbReference>
<dbReference type="GO" id="GO:0051092">
    <property type="term" value="P:positive regulation of NF-kappaB transcription factor activity"/>
    <property type="evidence" value="ECO:0000314"/>
    <property type="project" value="UniProtKB"/>
</dbReference>
<dbReference type="GO" id="GO:0051881">
    <property type="term" value="P:regulation of mitochondrial membrane potential"/>
    <property type="evidence" value="ECO:0000315"/>
    <property type="project" value="UniProtKB"/>
</dbReference>
<dbReference type="GO" id="GO:0042542">
    <property type="term" value="P:response to hydrogen peroxide"/>
    <property type="evidence" value="ECO:0000314"/>
    <property type="project" value="UniProtKB"/>
</dbReference>
<dbReference type="GO" id="GO:0032496">
    <property type="term" value="P:response to lipopolysaccharide"/>
    <property type="evidence" value="ECO:0000250"/>
    <property type="project" value="UniProtKB"/>
</dbReference>
<dbReference type="GO" id="GO:0006979">
    <property type="term" value="P:response to oxidative stress"/>
    <property type="evidence" value="ECO:0000315"/>
    <property type="project" value="UniProtKB"/>
</dbReference>
<dbReference type="CDD" id="cd03015">
    <property type="entry name" value="PRX_Typ2cys"/>
    <property type="match status" value="1"/>
</dbReference>
<dbReference type="FunFam" id="3.40.30.10:FF:000003">
    <property type="entry name" value="Peroxiredoxin 1"/>
    <property type="match status" value="1"/>
</dbReference>
<dbReference type="Gene3D" id="3.40.30.10">
    <property type="entry name" value="Glutaredoxin"/>
    <property type="match status" value="1"/>
</dbReference>
<dbReference type="InterPro" id="IPR000866">
    <property type="entry name" value="AhpC/TSA"/>
</dbReference>
<dbReference type="InterPro" id="IPR050217">
    <property type="entry name" value="Peroxiredoxin"/>
</dbReference>
<dbReference type="InterPro" id="IPR019479">
    <property type="entry name" value="Peroxiredoxin_C"/>
</dbReference>
<dbReference type="InterPro" id="IPR036249">
    <property type="entry name" value="Thioredoxin-like_sf"/>
</dbReference>
<dbReference type="InterPro" id="IPR013766">
    <property type="entry name" value="Thioredoxin_domain"/>
</dbReference>
<dbReference type="PANTHER" id="PTHR10681">
    <property type="entry name" value="THIOREDOXIN PEROXIDASE"/>
    <property type="match status" value="1"/>
</dbReference>
<dbReference type="PANTHER" id="PTHR10681:SF128">
    <property type="entry name" value="THIOREDOXIN-DEPENDENT PEROXIDE REDUCTASE, MITOCHONDRIAL"/>
    <property type="match status" value="1"/>
</dbReference>
<dbReference type="Pfam" id="PF10417">
    <property type="entry name" value="1-cysPrx_C"/>
    <property type="match status" value="1"/>
</dbReference>
<dbReference type="Pfam" id="PF00578">
    <property type="entry name" value="AhpC-TSA"/>
    <property type="match status" value="1"/>
</dbReference>
<dbReference type="SUPFAM" id="SSF52833">
    <property type="entry name" value="Thioredoxin-like"/>
    <property type="match status" value="1"/>
</dbReference>
<dbReference type="PROSITE" id="PS51352">
    <property type="entry name" value="THIOREDOXIN_2"/>
    <property type="match status" value="1"/>
</dbReference>
<accession>P30048</accession>
<accession>B2R7Z0</accession>
<accession>D3DRC9</accession>
<accession>E9PH29</accession>
<accession>P35690</accession>
<accession>Q0D2H1</accession>
<accession>Q13776</accession>
<accession>Q5T5V2</accession>
<accession>Q96HK4</accession>
<feature type="transit peptide" description="Mitochondrion" evidence="24">
    <location>
        <begin position="1"/>
        <end position="61"/>
    </location>
</feature>
<feature type="chain" id="PRO_0000023782" description="Thioredoxin-dependent peroxide reductase, mitochondrial">
    <location>
        <begin position="62"/>
        <end position="256"/>
    </location>
</feature>
<feature type="domain" description="Thioredoxin" evidence="3">
    <location>
        <begin position="63"/>
        <end position="221"/>
    </location>
</feature>
<feature type="active site" description="Cysteine sulfenic acid (-SOH) intermediate" evidence="2">
    <location>
        <position position="108"/>
    </location>
</feature>
<feature type="modified residue" description="N6-succinyllysine" evidence="1">
    <location>
        <position position="83"/>
    </location>
</feature>
<feature type="modified residue" description="N6-acetyllysine; alternate" evidence="23">
    <location>
        <position position="91"/>
    </location>
</feature>
<feature type="modified residue" description="N6-succinyllysine; alternate" evidence="1">
    <location>
        <position position="91"/>
    </location>
</feature>
<feature type="modified residue" description="Phosphothreonine" evidence="21">
    <location>
        <position position="146"/>
    </location>
</feature>
<feature type="disulfide bond" description="Interchain (with C-229); in linked form" evidence="2">
    <location>
        <position position="108"/>
    </location>
</feature>
<feature type="disulfide bond" description="Interchain (with C-108); in linked form" evidence="2">
    <location>
        <position position="229"/>
    </location>
</feature>
<feature type="splice variant" id="VSP_054050" description="In isoform 2." evidence="18">
    <location>
        <begin position="51"/>
        <end position="68"/>
    </location>
</feature>
<feature type="sequence variant" id="VAR_025052" description="In dbSNP:rs34698541." evidence="17">
    <original>S</original>
    <variation>R</variation>
    <location>
        <position position="55"/>
    </location>
</feature>
<feature type="sequence variant" id="VAR_087329" description="In SCAR32; uncertain significance; dbSNP:rs202061531." evidence="14">
    <original>A</original>
    <variation>G</variation>
    <location>
        <position position="142"/>
    </location>
</feature>
<feature type="sequence variant" id="VAR_087330" description="In SCAR32; absent protein, reduced glutathione peroxidase activity and reduced PRDX5 protein levels in patient fibroblasts; dbSNP:rs140609531." evidence="14">
    <location>
        <begin position="170"/>
        <end position="256"/>
    </location>
</feature>
<feature type="sequence variant" id="VAR_059546" description="In dbSNP:rs11554902.">
    <original>R</original>
    <variation>Q</variation>
    <location>
        <position position="170"/>
    </location>
</feature>
<feature type="sequence variant" id="VAR_087331" description="In PPPCD; dbSNP:rs2133650052." evidence="13 15">
    <original>D</original>
    <variation>H</variation>
    <location>
        <position position="190"/>
    </location>
</feature>
<feature type="sequence variant" id="VAR_087332" description="In SCAR32; unstable protein leading to its degradation, reduced glutathione peroxidase activity and reduced PRDX5 protein levels in patient fibroblasts; dbSNP:rs548327727." evidence="14">
    <original>D</original>
    <variation>N</variation>
    <location>
        <position position="202"/>
    </location>
</feature>
<feature type="sequence variant" id="VAR_025053" description="In dbSNP:rs36064375." evidence="17">
    <original>A</original>
    <variation>T</variation>
    <location>
        <position position="218"/>
    </location>
</feature>
<feature type="sequence variant" id="VAR_025054" description="In dbSNP:rs35697338." evidence="17">
    <original>T</original>
    <variation>I</variation>
    <location>
        <position position="234"/>
    </location>
</feature>
<feature type="mutagenesis site" description="Forms obligate homodimers under reducing and oxidizing conditions; does not form dodecamer rings under reducing conditions." evidence="12">
    <original>S</original>
    <variation>E</variation>
    <location>
        <position position="136"/>
    </location>
</feature>
<feature type="mutagenesis site" description="Forms predominantly dodecamer rings." evidence="12">
    <original>S</original>
    <variation>C</variation>
    <location>
        <position position="139"/>
    </location>
</feature>
<feature type="mutagenesis site" description="Impairs phosphorylation." evidence="10">
    <original>T</original>
    <variation>A</variation>
    <location>
        <position position="146"/>
    </location>
</feature>
<feature type="sequence conflict" description="In Ref. 8; AAH08435." evidence="18" ref="8">
    <original>R</original>
    <variation>W</variation>
    <location>
        <position position="31"/>
    </location>
</feature>
<feature type="strand" evidence="26">
    <location>
        <begin position="73"/>
        <end position="78"/>
    </location>
</feature>
<feature type="strand" evidence="26">
    <location>
        <begin position="81"/>
        <end position="86"/>
    </location>
</feature>
<feature type="helix" evidence="26">
    <location>
        <begin position="87"/>
        <end position="90"/>
    </location>
</feature>
<feature type="strand" evidence="26">
    <location>
        <begin position="93"/>
        <end position="99"/>
    </location>
</feature>
<feature type="helix" evidence="26">
    <location>
        <begin position="107"/>
        <end position="117"/>
    </location>
</feature>
<feature type="helix" evidence="26">
    <location>
        <begin position="119"/>
        <end position="123"/>
    </location>
</feature>
<feature type="turn" evidence="26">
    <location>
        <begin position="124"/>
        <end position="126"/>
    </location>
</feature>
<feature type="strand" evidence="26">
    <location>
        <begin position="127"/>
        <end position="135"/>
    </location>
</feature>
<feature type="helix" evidence="26">
    <location>
        <begin position="137"/>
        <end position="144"/>
    </location>
</feature>
<feature type="helix" evidence="26">
    <location>
        <begin position="148"/>
        <end position="150"/>
    </location>
</feature>
<feature type="strand" evidence="26">
    <location>
        <begin position="157"/>
        <end position="162"/>
    </location>
</feature>
<feature type="strand" evidence="25">
    <location>
        <begin position="164"/>
        <end position="166"/>
    </location>
</feature>
<feature type="helix" evidence="26">
    <location>
        <begin position="167"/>
        <end position="171"/>
    </location>
</feature>
<feature type="turn" evidence="26">
    <location>
        <begin position="177"/>
        <end position="180"/>
    </location>
</feature>
<feature type="strand" evidence="26">
    <location>
        <begin position="184"/>
        <end position="189"/>
    </location>
</feature>
<feature type="strand" evidence="26">
    <location>
        <begin position="193"/>
        <end position="201"/>
    </location>
</feature>
<feature type="helix" evidence="26">
    <location>
        <begin position="209"/>
        <end position="225"/>
    </location>
</feature>
<feature type="helix" evidence="26">
    <location>
        <begin position="244"/>
        <end position="254"/>
    </location>
</feature>
<proteinExistence type="evidence at protein level"/>
<comment type="function">
    <text evidence="1 5 7 12 14 16">Thiol-specific peroxidase that catalyzes the reduction of hydrogen peroxide and organic hydroperoxides to water and alcohols, respectively. Plays a role in cell protection against oxidative stress by detoxifying peroxides (PubMed:17707404, PubMed:29438714, PubMed:33889951, PubMed:7733872). Acts synergistically with MAP3K13 to regulate the activation of NF-kappa-B in the cytosol (PubMed:12492477). Required for the maintenance of physical strength (By similarity).</text>
</comment>
<comment type="catalytic activity">
    <reaction evidence="7 8">
        <text>a hydroperoxide + [thioredoxin]-dithiol = an alcohol + [thioredoxin]-disulfide + H2O</text>
        <dbReference type="Rhea" id="RHEA:62620"/>
        <dbReference type="Rhea" id="RHEA-COMP:10698"/>
        <dbReference type="Rhea" id="RHEA-COMP:10700"/>
        <dbReference type="ChEBI" id="CHEBI:15377"/>
        <dbReference type="ChEBI" id="CHEBI:29950"/>
        <dbReference type="ChEBI" id="CHEBI:30879"/>
        <dbReference type="ChEBI" id="CHEBI:35924"/>
        <dbReference type="ChEBI" id="CHEBI:50058"/>
        <dbReference type="EC" id="1.11.1.24"/>
    </reaction>
</comment>
<comment type="subunit">
    <text evidence="5 6 7 9 10 11 12">Homodimer; disulfide-linked, upon oxidation (PubMed:17707404, PubMed:27238969, PubMed:29438714). 6 homodimers assemble to form a ring-like dodecamer (PubMed:17707404, PubMed:27238969, PubMed:29438714). Interacts with NEK6 (PubMed:20873783). Interacts with LRRK2 (PubMed:21850687). Interacts with MAP3K13 (PubMed:12492477). Interacts with RPS6KC1 (via PX domain) (PubMed:15750338).</text>
</comment>
<comment type="interaction">
    <interactant intactId="EBI-748336">
        <id>P30048</id>
    </interactant>
    <interactant intactId="EBI-739467">
        <id>Q9H8Y8</id>
        <label>GORASP2</label>
    </interactant>
    <organismsDiffer>false</organismsDiffer>
    <experiments>6</experiments>
</comment>
<comment type="interaction">
    <interactant intactId="EBI-748336">
        <id>P30048</id>
    </interactant>
    <interactant intactId="EBI-5323863">
        <id>Q5S007</id>
        <label>LRRK2</label>
    </interactant>
    <organismsDiffer>false</organismsDiffer>
    <experiments>14</experiments>
</comment>
<comment type="interaction">
    <interactant intactId="EBI-748336">
        <id>P30048</id>
    </interactant>
    <interactant intactId="EBI-748336">
        <id>P30048</id>
        <label>PRDX3</label>
    </interactant>
    <organismsDiffer>false</organismsDiffer>
    <experiments>2</experiments>
</comment>
<comment type="interaction">
    <interactant intactId="EBI-748336">
        <id>P30048</id>
    </interactant>
    <interactant intactId="EBI-12840750">
        <id>Q15935</id>
        <label>ZNF77</label>
    </interactant>
    <organismsDiffer>false</organismsDiffer>
    <experiments>3</experiments>
</comment>
<comment type="subcellular location">
    <subcellularLocation>
        <location evidence="14">Mitochondrion</location>
    </subcellularLocation>
    <subcellularLocation>
        <location evidence="19">Cytoplasm</location>
    </subcellularLocation>
    <subcellularLocation>
        <location evidence="6">Early endosome</location>
    </subcellularLocation>
    <text evidence="6">Localizes to early endosomes in a RPS6KC1-dependent manner.</text>
</comment>
<comment type="alternative products">
    <event type="alternative splicing"/>
    <isoform>
        <id>P30048-1</id>
        <name>1</name>
        <sequence type="displayed"/>
    </isoform>
    <isoform>
        <id>P30048-2</id>
        <name>2</name>
        <sequence type="described" ref="VSP_054050"/>
    </isoform>
</comment>
<comment type="PTM">
    <text evidence="10">Phosphorylated by LRRK2; phosphorylation reduces perodixase activity.</text>
</comment>
<comment type="PTM">
    <text evidence="4">The enzyme can be inactivated by further oxidation of the cysteine sulfenic acid (C(P)-SOH) to sulphinic acid (C(P)-SO2H) and sulphonic acid (C(P)-SO3H) instead of its condensation to a disulfide bond.</text>
</comment>
<comment type="PTM">
    <text evidence="1">S-palmitoylated.</text>
</comment>
<comment type="disease" evidence="14">
    <disease id="DI-06413">
        <name>Spinocerebellar ataxia, autosomal recessive, 32</name>
        <acronym>SCAR32</acronym>
        <description>A form of spinocerebellar ataxia, a clinically and genetically heterogeneous group of cerebellar disorders due to degeneration of the cerebellum with variable involvement of the brainstem and spinal cord. SCAR32 is characterized by the onset of gait ataxia in the second or third decades of life. Other classic features include upper limb ataxia, oculomotor signs, dysphagia, and dysarthria. Some patients may have hyper- or hypokinetic movement abnormalities. Brain imaging shows cerebellar atrophy. Atrophy can extend to the brainstem and medullary olives.</description>
        <dbReference type="MIM" id="619862"/>
    </disease>
    <text>The disease is caused by variants affecting the gene represented in this entry.</text>
</comment>
<comment type="disease" evidence="13 15">
    <disease id="DI-06421">
        <name>Corneal dystrophy, punctiform and polychromatic pre-Descemet</name>
        <acronym>PPPCD</acronym>
        <description>An autosomal dominant corneal dystrophy characterized by the presence of punctiform, multicolored opacities in the posterior stroma, immediately anterior to Descemet membrane. Affected individuals are typically asymptomatic.</description>
        <dbReference type="MIM" id="619871"/>
    </disease>
    <text>The disease is caused by variants affecting the gene represented in this entry.</text>
</comment>
<comment type="miscellaneous">
    <text evidence="20">The active site is a conserved redox-active cysteine residue, the peroxidatic cysteine (C(P)), which makes the nucleophilic attack on the peroxide substrate. The peroxide oxidizes the C(P)-SH to cysteine sulfenic acid (C(P)-SOH), which then reacts with another cysteine residue, the resolving cysteine (C(R)), to form a disulfide bridge. The disulfide is subsequently reduced by an appropriate electron donor to complete the catalytic cycle. In this typical 2-Cys peroxiredoxin, C(R) is provided by the other dimeric subunit to form an intersubunit disulfide. The disulfide is subsequently reduced by thioredoxin.</text>
</comment>
<comment type="similarity">
    <text evidence="18">Belongs to the peroxiredoxin family. AhpC/Prx1 subfamily.</text>
</comment>
<comment type="caution">
    <text>It is uncertain whether transit peptide cleavage occurs after His-61 or Ala-62. Peptides have been found for both N-termini.</text>
</comment>
<keyword id="KW-0002">3D-structure</keyword>
<keyword id="KW-0007">Acetylation</keyword>
<keyword id="KW-0025">Alternative splicing</keyword>
<keyword id="KW-0049">Antioxidant</keyword>
<keyword id="KW-1212">Corneal dystrophy</keyword>
<keyword id="KW-0963">Cytoplasm</keyword>
<keyword id="KW-0903">Direct protein sequencing</keyword>
<keyword id="KW-0225">Disease variant</keyword>
<keyword id="KW-1015">Disulfide bond</keyword>
<keyword id="KW-0967">Endosome</keyword>
<keyword id="KW-0449">Lipoprotein</keyword>
<keyword id="KW-0496">Mitochondrion</keyword>
<keyword id="KW-0523">Neurodegeneration</keyword>
<keyword id="KW-0560">Oxidoreductase</keyword>
<keyword id="KW-0564">Palmitate</keyword>
<keyword id="KW-0575">Peroxidase</keyword>
<keyword id="KW-0597">Phosphoprotein</keyword>
<keyword id="KW-1267">Proteomics identification</keyword>
<keyword id="KW-0676">Redox-active center</keyword>
<keyword id="KW-1185">Reference proteome</keyword>
<keyword id="KW-0809">Transit peptide</keyword>
<sequence length="256" mass="27693">MAAAVGRLLRASVARHVSAIPWGISATAALRPAACGRTSLTNLLCSGSSQAKLFSTSSSCHAPAVTQHAPYFKGTAVVNGEFKDLSLDDFKGKYLVLFFYPLDFTFVCPTEIVAFSDKANEFHDVNCEVVAVSVDSHFSHLAWINTPRKNGGLGHMNIALLSDLTKQISRDYGVLLEGSGLALRGLFIIDPNGVIKHLSVNDLPVGRSVEETLRLVKAFQYVETHGEVCPANWTPDSPTIKPSPAASKEYFQKVNQ</sequence>
<protein>
    <recommendedName>
        <fullName>Thioredoxin-dependent peroxide reductase, mitochondrial</fullName>
        <ecNumber evidence="7 8">1.11.1.24</ecNumber>
    </recommendedName>
    <alternativeName>
        <fullName>Antioxidant protein 1</fullName>
        <shortName>AOP-1</shortName>
    </alternativeName>
    <alternativeName>
        <fullName>HBC189</fullName>
    </alternativeName>
    <alternativeName>
        <fullName>Peroxiredoxin III</fullName>
        <shortName>Prx-III</shortName>
    </alternativeName>
    <alternativeName>
        <fullName>Peroxiredoxin-3</fullName>
    </alternativeName>
    <alternativeName>
        <fullName>Protein MER5 homolog</fullName>
    </alternativeName>
    <alternativeName>
        <fullName evidence="18">Thioredoxin-dependent peroxiredoxin 3</fullName>
    </alternativeName>
</protein>
<evidence type="ECO:0000250" key="1">
    <source>
        <dbReference type="UniProtKB" id="P20108"/>
    </source>
</evidence>
<evidence type="ECO:0000250" key="2">
    <source>
        <dbReference type="UniProtKB" id="P35705"/>
    </source>
</evidence>
<evidence type="ECO:0000255" key="3">
    <source>
        <dbReference type="PROSITE-ProRule" id="PRU00691"/>
    </source>
</evidence>
<evidence type="ECO:0000269" key="4">
    <source>
    </source>
</evidence>
<evidence type="ECO:0000269" key="5">
    <source>
    </source>
</evidence>
<evidence type="ECO:0000269" key="6">
    <source>
    </source>
</evidence>
<evidence type="ECO:0000269" key="7">
    <source>
    </source>
</evidence>
<evidence type="ECO:0000269" key="8">
    <source>
    </source>
</evidence>
<evidence type="ECO:0000269" key="9">
    <source>
    </source>
</evidence>
<evidence type="ECO:0000269" key="10">
    <source>
    </source>
</evidence>
<evidence type="ECO:0000269" key="11">
    <source>
    </source>
</evidence>
<evidence type="ECO:0000269" key="12">
    <source>
    </source>
</evidence>
<evidence type="ECO:0000269" key="13">
    <source>
    </source>
</evidence>
<evidence type="ECO:0000269" key="14">
    <source>
    </source>
</evidence>
<evidence type="ECO:0000269" key="15">
    <source>
    </source>
</evidence>
<evidence type="ECO:0000269" key="16">
    <source>
    </source>
</evidence>
<evidence type="ECO:0000269" key="17">
    <source ref="5"/>
</evidence>
<evidence type="ECO:0000305" key="18"/>
<evidence type="ECO:0000305" key="19">
    <source>
    </source>
</evidence>
<evidence type="ECO:0000305" key="20">
    <source>
    </source>
</evidence>
<evidence type="ECO:0000305" key="21">
    <source>
    </source>
</evidence>
<evidence type="ECO:0007744" key="22">
    <source>
        <dbReference type="PDB" id="5UCX"/>
    </source>
</evidence>
<evidence type="ECO:0007744" key="23">
    <source>
    </source>
</evidence>
<evidence type="ECO:0007744" key="24">
    <source>
    </source>
</evidence>
<evidence type="ECO:0007829" key="25">
    <source>
        <dbReference type="PDB" id="5JCG"/>
    </source>
</evidence>
<evidence type="ECO:0007829" key="26">
    <source>
        <dbReference type="PDB" id="5UCX"/>
    </source>
</evidence>
<reference key="1">
    <citation type="journal article" date="1995" name="Biochem. J.">
        <title>Mammalian antioxidant protein complements alkylhydroperoxide reductase (ahpC) mutation in Escherichia coli.</title>
        <authorList>
            <person name="Tsuji K."/>
            <person name="Copeland N.G."/>
            <person name="Jenkins N.A."/>
            <person name="Obinata M."/>
        </authorList>
    </citation>
    <scope>NUCLEOTIDE SEQUENCE [MRNA] (ISOFORM 1)</scope>
    <scope>FUNCTION</scope>
    <source>
        <tissue>Blood</tissue>
    </source>
</reference>
<reference key="2">
    <citation type="journal article" date="2004" name="Nat. Genet.">
        <title>Complete sequencing and characterization of 21,243 full-length human cDNAs.</title>
        <authorList>
            <person name="Ota T."/>
            <person name="Suzuki Y."/>
            <person name="Nishikawa T."/>
            <person name="Otsuki T."/>
            <person name="Sugiyama T."/>
            <person name="Irie R."/>
            <person name="Wakamatsu A."/>
            <person name="Hayashi K."/>
            <person name="Sato H."/>
            <person name="Nagai K."/>
            <person name="Kimura K."/>
            <person name="Makita H."/>
            <person name="Sekine M."/>
            <person name="Obayashi M."/>
            <person name="Nishi T."/>
            <person name="Shibahara T."/>
            <person name="Tanaka T."/>
            <person name="Ishii S."/>
            <person name="Yamamoto J."/>
            <person name="Saito K."/>
            <person name="Kawai Y."/>
            <person name="Isono Y."/>
            <person name="Nakamura Y."/>
            <person name="Nagahari K."/>
            <person name="Murakami K."/>
            <person name="Yasuda T."/>
            <person name="Iwayanagi T."/>
            <person name="Wagatsuma M."/>
            <person name="Shiratori A."/>
            <person name="Sudo H."/>
            <person name="Hosoiri T."/>
            <person name="Kaku Y."/>
            <person name="Kodaira H."/>
            <person name="Kondo H."/>
            <person name="Sugawara M."/>
            <person name="Takahashi M."/>
            <person name="Kanda K."/>
            <person name="Yokoi T."/>
            <person name="Furuya T."/>
            <person name="Kikkawa E."/>
            <person name="Omura Y."/>
            <person name="Abe K."/>
            <person name="Kamihara K."/>
            <person name="Katsuta N."/>
            <person name="Sato K."/>
            <person name="Tanikawa M."/>
            <person name="Yamazaki M."/>
            <person name="Ninomiya K."/>
            <person name="Ishibashi T."/>
            <person name="Yamashita H."/>
            <person name="Murakawa K."/>
            <person name="Fujimori K."/>
            <person name="Tanai H."/>
            <person name="Kimata M."/>
            <person name="Watanabe M."/>
            <person name="Hiraoka S."/>
            <person name="Chiba Y."/>
            <person name="Ishida S."/>
            <person name="Ono Y."/>
            <person name="Takiguchi S."/>
            <person name="Watanabe S."/>
            <person name="Yosida M."/>
            <person name="Hotuta T."/>
            <person name="Kusano J."/>
            <person name="Kanehori K."/>
            <person name="Takahashi-Fujii A."/>
            <person name="Hara H."/>
            <person name="Tanase T.-O."/>
            <person name="Nomura Y."/>
            <person name="Togiya S."/>
            <person name="Komai F."/>
            <person name="Hara R."/>
            <person name="Takeuchi K."/>
            <person name="Arita M."/>
            <person name="Imose N."/>
            <person name="Musashino K."/>
            <person name="Yuuki H."/>
            <person name="Oshima A."/>
            <person name="Sasaki N."/>
            <person name="Aotsuka S."/>
            <person name="Yoshikawa Y."/>
            <person name="Matsunawa H."/>
            <person name="Ichihara T."/>
            <person name="Shiohata N."/>
            <person name="Sano S."/>
            <person name="Moriya S."/>
            <person name="Momiyama H."/>
            <person name="Satoh N."/>
            <person name="Takami S."/>
            <person name="Terashima Y."/>
            <person name="Suzuki O."/>
            <person name="Nakagawa S."/>
            <person name="Senoh A."/>
            <person name="Mizoguchi H."/>
            <person name="Goto Y."/>
            <person name="Shimizu F."/>
            <person name="Wakebe H."/>
            <person name="Hishigaki H."/>
            <person name="Watanabe T."/>
            <person name="Sugiyama A."/>
            <person name="Takemoto M."/>
            <person name="Kawakami B."/>
            <person name="Yamazaki M."/>
            <person name="Watanabe K."/>
            <person name="Kumagai A."/>
            <person name="Itakura S."/>
            <person name="Fukuzumi Y."/>
            <person name="Fujimori Y."/>
            <person name="Komiyama M."/>
            <person name="Tashiro H."/>
            <person name="Tanigami A."/>
            <person name="Fujiwara T."/>
            <person name="Ono T."/>
            <person name="Yamada K."/>
            <person name="Fujii Y."/>
            <person name="Ozaki K."/>
            <person name="Hirao M."/>
            <person name="Ohmori Y."/>
            <person name="Kawabata A."/>
            <person name="Hikiji T."/>
            <person name="Kobatake N."/>
            <person name="Inagaki H."/>
            <person name="Ikema Y."/>
            <person name="Okamoto S."/>
            <person name="Okitani R."/>
            <person name="Kawakami T."/>
            <person name="Noguchi S."/>
            <person name="Itoh T."/>
            <person name="Shigeta K."/>
            <person name="Senba T."/>
            <person name="Matsumura K."/>
            <person name="Nakajima Y."/>
            <person name="Mizuno T."/>
            <person name="Morinaga M."/>
            <person name="Sasaki M."/>
            <person name="Togashi T."/>
            <person name="Oyama M."/>
            <person name="Hata H."/>
            <person name="Watanabe M."/>
            <person name="Komatsu T."/>
            <person name="Mizushima-Sugano J."/>
            <person name="Satoh T."/>
            <person name="Shirai Y."/>
            <person name="Takahashi Y."/>
            <person name="Nakagawa K."/>
            <person name="Okumura K."/>
            <person name="Nagase T."/>
            <person name="Nomura N."/>
            <person name="Kikuchi H."/>
            <person name="Masuho Y."/>
            <person name="Yamashita R."/>
            <person name="Nakai K."/>
            <person name="Yada T."/>
            <person name="Nakamura Y."/>
            <person name="Ohara O."/>
            <person name="Isogai T."/>
            <person name="Sugano S."/>
        </authorList>
    </citation>
    <scope>NUCLEOTIDE SEQUENCE [LARGE SCALE MRNA] (ISOFORM 1)</scope>
    <source>
        <tissue>Lung</tissue>
    </source>
</reference>
<reference key="3">
    <citation type="submission" date="2004-05" db="EMBL/GenBank/DDBJ databases">
        <title>Cloning of human full open reading frames in Gateway(TM) system entry vector (pDONR201).</title>
        <authorList>
            <person name="Ebert L."/>
            <person name="Schick M."/>
            <person name="Neubert P."/>
            <person name="Schatten R."/>
            <person name="Henze S."/>
            <person name="Korn B."/>
        </authorList>
    </citation>
    <scope>NUCLEOTIDE SEQUENCE [LARGE SCALE MRNA] (ISOFORM 1)</scope>
</reference>
<reference key="4">
    <citation type="submission" date="2004-10" db="EMBL/GenBank/DDBJ databases">
        <title>Cloning of human full-length CDSs in BD Creator(TM) system donor vector.</title>
        <authorList>
            <person name="Kalnine N."/>
            <person name="Chen X."/>
            <person name="Rolfs A."/>
            <person name="Halleck A."/>
            <person name="Hines L."/>
            <person name="Eisenstein S."/>
            <person name="Koundinya M."/>
            <person name="Raphael J."/>
            <person name="Moreira D."/>
            <person name="Kelley T."/>
            <person name="LaBaer J."/>
            <person name="Lin Y."/>
            <person name="Phelan M."/>
            <person name="Farmer A."/>
        </authorList>
    </citation>
    <scope>NUCLEOTIDE SEQUENCE [LARGE SCALE MRNA] (ISOFORM 1)</scope>
</reference>
<reference key="5">
    <citation type="submission" date="2005-11" db="EMBL/GenBank/DDBJ databases">
        <authorList>
            <consortium name="NIEHS SNPs program"/>
        </authorList>
    </citation>
    <scope>NUCLEOTIDE SEQUENCE [GENOMIC DNA]</scope>
    <scope>VARIANTS ARG-55; THR-218 AND ILE-234</scope>
</reference>
<reference key="6">
    <citation type="journal article" date="2004" name="Nature">
        <title>The DNA sequence and comparative analysis of human chromosome 10.</title>
        <authorList>
            <person name="Deloukas P."/>
            <person name="Earthrowl M.E."/>
            <person name="Grafham D.V."/>
            <person name="Rubenfield M."/>
            <person name="French L."/>
            <person name="Steward C.A."/>
            <person name="Sims S.K."/>
            <person name="Jones M.C."/>
            <person name="Searle S."/>
            <person name="Scott C."/>
            <person name="Howe K."/>
            <person name="Hunt S.E."/>
            <person name="Andrews T.D."/>
            <person name="Gilbert J.G.R."/>
            <person name="Swarbreck D."/>
            <person name="Ashurst J.L."/>
            <person name="Taylor A."/>
            <person name="Battles J."/>
            <person name="Bird C.P."/>
            <person name="Ainscough R."/>
            <person name="Almeida J.P."/>
            <person name="Ashwell R.I.S."/>
            <person name="Ambrose K.D."/>
            <person name="Babbage A.K."/>
            <person name="Bagguley C.L."/>
            <person name="Bailey J."/>
            <person name="Banerjee R."/>
            <person name="Bates K."/>
            <person name="Beasley H."/>
            <person name="Bray-Allen S."/>
            <person name="Brown A.J."/>
            <person name="Brown J.Y."/>
            <person name="Burford D.C."/>
            <person name="Burrill W."/>
            <person name="Burton J."/>
            <person name="Cahill P."/>
            <person name="Camire D."/>
            <person name="Carter N.P."/>
            <person name="Chapman J.C."/>
            <person name="Clark S.Y."/>
            <person name="Clarke G."/>
            <person name="Clee C.M."/>
            <person name="Clegg S."/>
            <person name="Corby N."/>
            <person name="Coulson A."/>
            <person name="Dhami P."/>
            <person name="Dutta I."/>
            <person name="Dunn M."/>
            <person name="Faulkner L."/>
            <person name="Frankish A."/>
            <person name="Frankland J.A."/>
            <person name="Garner P."/>
            <person name="Garnett J."/>
            <person name="Gribble S."/>
            <person name="Griffiths C."/>
            <person name="Grocock R."/>
            <person name="Gustafson E."/>
            <person name="Hammond S."/>
            <person name="Harley J.L."/>
            <person name="Hart E."/>
            <person name="Heath P.D."/>
            <person name="Ho T.P."/>
            <person name="Hopkins B."/>
            <person name="Horne J."/>
            <person name="Howden P.J."/>
            <person name="Huckle E."/>
            <person name="Hynds C."/>
            <person name="Johnson C."/>
            <person name="Johnson D."/>
            <person name="Kana A."/>
            <person name="Kay M."/>
            <person name="Kimberley A.M."/>
            <person name="Kershaw J.K."/>
            <person name="Kokkinaki M."/>
            <person name="Laird G.K."/>
            <person name="Lawlor S."/>
            <person name="Lee H.M."/>
            <person name="Leongamornlert D.A."/>
            <person name="Laird G."/>
            <person name="Lloyd C."/>
            <person name="Lloyd D.M."/>
            <person name="Loveland J."/>
            <person name="Lovell J."/>
            <person name="McLaren S."/>
            <person name="McLay K.E."/>
            <person name="McMurray A."/>
            <person name="Mashreghi-Mohammadi M."/>
            <person name="Matthews L."/>
            <person name="Milne S."/>
            <person name="Nickerson T."/>
            <person name="Nguyen M."/>
            <person name="Overton-Larty E."/>
            <person name="Palmer S.A."/>
            <person name="Pearce A.V."/>
            <person name="Peck A.I."/>
            <person name="Pelan S."/>
            <person name="Phillimore B."/>
            <person name="Porter K."/>
            <person name="Rice C.M."/>
            <person name="Rogosin A."/>
            <person name="Ross M.T."/>
            <person name="Sarafidou T."/>
            <person name="Sehra H.K."/>
            <person name="Shownkeen R."/>
            <person name="Skuce C.D."/>
            <person name="Smith M."/>
            <person name="Standring L."/>
            <person name="Sycamore N."/>
            <person name="Tester J."/>
            <person name="Thorpe A."/>
            <person name="Torcasso W."/>
            <person name="Tracey A."/>
            <person name="Tromans A."/>
            <person name="Tsolas J."/>
            <person name="Wall M."/>
            <person name="Walsh J."/>
            <person name="Wang H."/>
            <person name="Weinstock K."/>
            <person name="West A.P."/>
            <person name="Willey D.L."/>
            <person name="Whitehead S.L."/>
            <person name="Wilming L."/>
            <person name="Wray P.W."/>
            <person name="Young L."/>
            <person name="Chen Y."/>
            <person name="Lovering R.C."/>
            <person name="Moschonas N.K."/>
            <person name="Siebert R."/>
            <person name="Fechtel K."/>
            <person name="Bentley D."/>
            <person name="Durbin R.M."/>
            <person name="Hubbard T."/>
            <person name="Doucette-Stamm L."/>
            <person name="Beck S."/>
            <person name="Smith D.R."/>
            <person name="Rogers J."/>
        </authorList>
    </citation>
    <scope>NUCLEOTIDE SEQUENCE [LARGE SCALE GENOMIC DNA]</scope>
</reference>
<reference key="7">
    <citation type="submission" date="2005-09" db="EMBL/GenBank/DDBJ databases">
        <authorList>
            <person name="Mural R.J."/>
            <person name="Istrail S."/>
            <person name="Sutton G.G."/>
            <person name="Florea L."/>
            <person name="Halpern A.L."/>
            <person name="Mobarry C.M."/>
            <person name="Lippert R."/>
            <person name="Walenz B."/>
            <person name="Shatkay H."/>
            <person name="Dew I."/>
            <person name="Miller J.R."/>
            <person name="Flanigan M.J."/>
            <person name="Edwards N.J."/>
            <person name="Bolanos R."/>
            <person name="Fasulo D."/>
            <person name="Halldorsson B.V."/>
            <person name="Hannenhalli S."/>
            <person name="Turner R."/>
            <person name="Yooseph S."/>
            <person name="Lu F."/>
            <person name="Nusskern D.R."/>
            <person name="Shue B.C."/>
            <person name="Zheng X.H."/>
            <person name="Zhong F."/>
            <person name="Delcher A.L."/>
            <person name="Huson D.H."/>
            <person name="Kravitz S.A."/>
            <person name="Mouchard L."/>
            <person name="Reinert K."/>
            <person name="Remington K.A."/>
            <person name="Clark A.G."/>
            <person name="Waterman M.S."/>
            <person name="Eichler E.E."/>
            <person name="Adams M.D."/>
            <person name="Hunkapiller M.W."/>
            <person name="Myers E.W."/>
            <person name="Venter J.C."/>
        </authorList>
    </citation>
    <scope>NUCLEOTIDE SEQUENCE [LARGE SCALE GENOMIC DNA]</scope>
</reference>
<reference key="8">
    <citation type="journal article" date="2004" name="Genome Res.">
        <title>The status, quality, and expansion of the NIH full-length cDNA project: the Mammalian Gene Collection (MGC).</title>
        <authorList>
            <consortium name="The MGC Project Team"/>
        </authorList>
    </citation>
    <scope>NUCLEOTIDE SEQUENCE [LARGE SCALE MRNA] (ISOFORM 1)</scope>
    <source>
        <tissue>Bone marrow</tissue>
        <tissue>Skeletal muscle</tissue>
        <tissue>Testis</tissue>
        <tissue>Urinary bladder</tissue>
        <tissue>Uterus</tissue>
    </source>
</reference>
<reference key="9">
    <citation type="journal article" date="1992" name="Electrophoresis">
        <title>Human liver protein map: a reference database established by microsequencing and gel comparison.</title>
        <authorList>
            <person name="Hochstrasser D.F."/>
            <person name="Frutiger S."/>
            <person name="Paquet N."/>
            <person name="Bairoch A."/>
            <person name="Ravier F."/>
            <person name="Pasquali C."/>
            <person name="Sanchez J.-C."/>
            <person name="Tissot J.-D."/>
            <person name="Bjellqvist B."/>
            <person name="Vargas R."/>
            <person name="Appel R.D."/>
            <person name="Hughes G.J."/>
        </authorList>
    </citation>
    <scope>PROTEIN SEQUENCE OF 63-72 (ISOFORM 1)</scope>
    <source>
        <tissue>Liver</tissue>
    </source>
</reference>
<reference key="10">
    <citation type="submission" date="2008-12" db="UniProtKB">
        <authorList>
            <person name="Lubec G."/>
            <person name="Vishwanath V."/>
            <person name="Chen W.-Q."/>
            <person name="Sun Y."/>
        </authorList>
    </citation>
    <scope>PROTEIN SEQUENCE OF 74-93; 149-166 AND 171-214 (ISOFORM 1)</scope>
    <scope>IDENTIFICATION BY MASS SPECTROMETRY</scope>
    <source>
        <tissue>Brain</tissue>
        <tissue>Cajal-Retzius cell</tissue>
        <tissue>Fetal brain cortex</tissue>
    </source>
</reference>
<reference key="11">
    <citation type="journal article" date="2002" name="Biochem. J.">
        <title>A method for detection of overoxidation of cysteines: peroxiredoxins are oxidized in vivo at the active-site cysteine during oxidative stress.</title>
        <authorList>
            <person name="Wagner E."/>
            <person name="Luche S."/>
            <person name="Penna L."/>
            <person name="Chevallet M."/>
            <person name="van Dorsselaer A."/>
            <person name="Leize-Wagner E."/>
            <person name="Rabilloud T."/>
        </authorList>
    </citation>
    <scope>OVEROXIDATION AT CYS-108</scope>
</reference>
<reference key="12">
    <citation type="journal article" date="2003" name="Eur. J. Biochem.">
        <title>Mixed lineage kinase LZK and antioxidant protein-1 activate NF-kappaB synergistically.</title>
        <authorList>
            <person name="Masaki M."/>
            <person name="Ikeda A."/>
            <person name="Shiraki E."/>
            <person name="Oka S."/>
            <person name="Kawasaki T."/>
        </authorList>
    </citation>
    <scope>FUNCTION</scope>
    <scope>INTERACTION WITH MAP3K13</scope>
</reference>
<reference key="13">
    <citation type="journal article" date="2005" name="Mol. Cells">
        <title>RPK118, a PX domain-containing protein, interacts with peroxiredoxin-3 through pseudo-kinase domains.</title>
        <authorList>
            <person name="Liu L."/>
            <person name="Yang C."/>
            <person name="Yuan J."/>
            <person name="Chen X."/>
            <person name="Xu J."/>
            <person name="Wei Y."/>
            <person name="Yang J."/>
            <person name="Lin G."/>
            <person name="Yu L."/>
        </authorList>
    </citation>
    <scope>INTERACTION WITH RPS6KC1</scope>
    <scope>SUBCELLULAR LOCATION</scope>
</reference>
<reference key="14">
    <citation type="journal article" date="2007" name="J. Mol. Biol.">
        <title>Reconstitution of the mitochondrial PrxIII antioxidant defence pathway: general properties and factors affecting PrxIII activity and oligomeric state.</title>
        <authorList>
            <person name="Cao Z."/>
            <person name="Bhella D."/>
            <person name="Lindsay J.G."/>
        </authorList>
    </citation>
    <scope>FUNCTION</scope>
    <scope>CATALYTIC ACTIVITY</scope>
    <scope>SUBUNIT</scope>
</reference>
<reference key="15">
    <citation type="journal article" date="2009" name="Biochemistry">
        <title>Redox potential and peroxide reactivity of human peroxiredoxin 3.</title>
        <authorList>
            <person name="Cox A.G."/>
            <person name="Peskin A.V."/>
            <person name="Paton L.N."/>
            <person name="Winterbourn C.C."/>
            <person name="Hampton M.B."/>
        </authorList>
    </citation>
    <scope>CATALYTIC ACTIVITY</scope>
</reference>
<reference key="16">
    <citation type="journal article" date="2009" name="Science">
        <title>Lysine acetylation targets protein complexes and co-regulates major cellular functions.</title>
        <authorList>
            <person name="Choudhary C."/>
            <person name="Kumar C."/>
            <person name="Gnad F."/>
            <person name="Nielsen M.L."/>
            <person name="Rehman M."/>
            <person name="Walther T.C."/>
            <person name="Olsen J.V."/>
            <person name="Mann M."/>
        </authorList>
    </citation>
    <scope>ACETYLATION [LARGE SCALE ANALYSIS] AT LYS-91</scope>
    <scope>IDENTIFICATION BY MASS SPECTROMETRY [LARGE SCALE ANALYSIS]</scope>
</reference>
<reference key="17">
    <citation type="journal article" date="2010" name="J. Proteome Res.">
        <title>Characterization of hNek6 interactome reveals an important role for its short N-terminal domain and colocalization with proteins at the centrosome.</title>
        <authorList>
            <person name="Vaz Meirelles G."/>
            <person name="Ferreira Lanza D.C."/>
            <person name="da Silva J.C."/>
            <person name="Santana Bernachi J."/>
            <person name="Paes Leme A.F."/>
            <person name="Kobarg J."/>
        </authorList>
    </citation>
    <scope>INTERACTION WITH NEK6</scope>
</reference>
<reference key="18">
    <citation type="journal article" date="2011" name="BMC Syst. Biol.">
        <title>Initial characterization of the human central proteome.</title>
        <authorList>
            <person name="Burkard T.R."/>
            <person name="Planyavsky M."/>
            <person name="Kaupe I."/>
            <person name="Breitwieser F.P."/>
            <person name="Buerckstuemmer T."/>
            <person name="Bennett K.L."/>
            <person name="Superti-Furga G."/>
            <person name="Colinge J."/>
        </authorList>
    </citation>
    <scope>IDENTIFICATION BY MASS SPECTROMETRY [LARGE SCALE ANALYSIS]</scope>
</reference>
<reference key="19">
    <citation type="journal article" date="2011" name="Hum. Mutat.">
        <title>Mutations in LRRK2 increase phosphorylation of peroxiredoxin 3 exacerbating oxidative stress-induced neuronal death.</title>
        <authorList>
            <person name="Angeles D.C."/>
            <person name="Gan B.H."/>
            <person name="Onstead L."/>
            <person name="Zhao Y."/>
            <person name="Lim K.L."/>
            <person name="Dachsel J."/>
            <person name="Melrose H."/>
            <person name="Farrer M."/>
            <person name="Wszolek Z.K."/>
            <person name="Dickson D.W."/>
            <person name="Tan E.K."/>
        </authorList>
    </citation>
    <scope>INTERACTION WITH LRRK2</scope>
    <scope>PHOSPHORYLATION AT THR-146</scope>
    <scope>MUTAGENESIS OF THR-146</scope>
</reference>
<reference key="20">
    <citation type="journal article" date="2014" name="J. Proteomics">
        <title>An enzyme assisted RP-RPLC approach for in-depth analysis of human liver phosphoproteome.</title>
        <authorList>
            <person name="Bian Y."/>
            <person name="Song C."/>
            <person name="Cheng K."/>
            <person name="Dong M."/>
            <person name="Wang F."/>
            <person name="Huang J."/>
            <person name="Sun D."/>
            <person name="Wang L."/>
            <person name="Ye M."/>
            <person name="Zou H."/>
        </authorList>
    </citation>
    <scope>IDENTIFICATION BY MASS SPECTROMETRY [LARGE SCALE ANALYSIS]</scope>
    <source>
        <tissue>Liver</tissue>
    </source>
</reference>
<reference key="21">
    <citation type="journal article" date="2015" name="Proteomics">
        <title>N-terminome analysis of the human mitochondrial proteome.</title>
        <authorList>
            <person name="Vaca Jacome A.S."/>
            <person name="Rabilloud T."/>
            <person name="Schaeffer-Reiss C."/>
            <person name="Rompais M."/>
            <person name="Ayoub D."/>
            <person name="Lane L."/>
            <person name="Bairoch A."/>
            <person name="Van Dorsselaer A."/>
            <person name="Carapito C."/>
        </authorList>
    </citation>
    <scope>CLEAVAGE OF TRANSIT PEPTIDE [LARGE SCALE ANALYSIS] AFTER HIS-61</scope>
    <scope>IDENTIFICATION BY MASS SPECTROMETRY [LARGE SCALE ANALYSIS]</scope>
</reference>
<reference key="22">
    <citation type="journal article" date="2016" name="Structure">
        <title>Structures of human peroxiredoxin 3 suggest self-chaperoning assembly that maintains catalytic state.</title>
        <authorList>
            <person name="Yewdall N.A."/>
            <person name="Venugopal H."/>
            <person name="Desfosses A."/>
            <person name="Abrishami V."/>
            <person name="Yosaatmadja Y."/>
            <person name="Hampton M.B."/>
            <person name="Gerrard J.A."/>
            <person name="Goldstone D.C."/>
            <person name="Mitra A.K."/>
            <person name="Radjainia M."/>
        </authorList>
    </citation>
    <scope>X-RAY CRYSTALLOGRAPHY (2.80 ANGSTROMS)</scope>
    <scope>SUBUNIT</scope>
</reference>
<reference evidence="22" key="23">
    <citation type="journal article" date="2018" name="Biochem. Biophys. Res. Commun.">
        <title>Quaternary structure influences the peroxidase activity of peroxiredoxin 3.</title>
        <authorList>
            <person name="Yewdall N.A."/>
            <person name="Peskin A.V."/>
            <person name="Hampton M.B."/>
            <person name="Goldstone D.C."/>
            <person name="Pearce F.G."/>
            <person name="Gerrard J.A."/>
        </authorList>
    </citation>
    <scope>X-RAY CRYSTALLOGRAPHY (2.40 ANGSTROMS) OF 62-256 OF MUTANT CYS-139</scope>
    <scope>FUNCTION</scope>
    <scope>SUBUNIT</scope>
    <scope>MUTAGENESIS OF SER-136 AND SER-139</scope>
</reference>
<reference key="24">
    <citation type="journal article" date="2020" name="Am. J. Ophthalmol.">
        <title>Punctiform and Polychromatic Pre-Descemet Corneal Dystrophy: Clinical Evaluation and Identification of the Genetic Basis.</title>
        <authorList>
            <person name="Alio Del Barrio J.L."/>
            <person name="Chung D.D."/>
            <person name="Al-Shymali O."/>
            <person name="Barrington A."/>
            <person name="Jatavallabhula K."/>
            <person name="Swamy V.S."/>
            <person name="Yebana P."/>
            <person name="Angelica Henriquez-Recine M."/>
            <person name="Boto-de-Los-Bueis A."/>
            <person name="Alio J.L."/>
            <person name="Aldave A.J."/>
        </authorList>
    </citation>
    <scope>INVOLVEMENT IN PPPCD</scope>
    <scope>VARIANT PPPCD HIS-190</scope>
</reference>
<reference key="25">
    <citation type="journal article" date="2021" name="Brain">
        <title>Biallelic loss-of-function variations in PRDX3 cause cerebellar ataxia.</title>
        <authorList>
            <consortium name="PREPARE network"/>
            <person name="Rebelo A.P."/>
            <person name="Eidhof I."/>
            <person name="Cintra V.P."/>
            <person name="Guillot-Noel L."/>
            <person name="Pereira C.V."/>
            <person name="Timmann D."/>
            <person name="Traschuetz A."/>
            <person name="Schoels L."/>
            <person name="Coarelli G."/>
            <person name="Durr A."/>
            <person name="Anheim M."/>
            <person name="Tranchant C."/>
            <person name="van de Warrenburg B."/>
            <person name="Guissart C."/>
            <person name="Koenig M."/>
            <person name="Howell J."/>
            <person name="Moraes C.T."/>
            <person name="Schenck A."/>
            <person name="Stevanin G."/>
            <person name="Zuechner S."/>
            <person name="Synofzik M."/>
        </authorList>
    </citation>
    <scope>INVOLVEMENT IN SCAR32</scope>
    <scope>VARIANTS SCAR32 GLY-142; 170-ARG--GLN-256 DEL AND ASN-202</scope>
    <scope>FUNCTION</scope>
    <scope>SUBCELLULAR LOCATION</scope>
</reference>
<reference key="26">
    <citation type="journal article" date="2022" name="Cornea">
        <title>Confirmation of PRDX3 c.568G&gt;C as the Genetic Basis of Punctiform and Polychromatic Pre-Descemet Corneal Dystrophy.</title>
        <authorList>
            <person name="Choo C.H."/>
            <person name="Boto de Los Bueis A."/>
            <person name="Chung D.D."/>
            <person name="Aldave A.J."/>
        </authorList>
    </citation>
    <scope>VARIANT PPPCD HIS-190</scope>
</reference>
<gene>
    <name type="primary">PRDX3</name>
    <name type="synonym">AOP1</name>
</gene>
<organism>
    <name type="scientific">Homo sapiens</name>
    <name type="common">Human</name>
    <dbReference type="NCBI Taxonomy" id="9606"/>
    <lineage>
        <taxon>Eukaryota</taxon>
        <taxon>Metazoa</taxon>
        <taxon>Chordata</taxon>
        <taxon>Craniata</taxon>
        <taxon>Vertebrata</taxon>
        <taxon>Euteleostomi</taxon>
        <taxon>Mammalia</taxon>
        <taxon>Eutheria</taxon>
        <taxon>Euarchontoglires</taxon>
        <taxon>Primates</taxon>
        <taxon>Haplorrhini</taxon>
        <taxon>Catarrhini</taxon>
        <taxon>Hominidae</taxon>
        <taxon>Homo</taxon>
    </lineage>
</organism>